<dbReference type="EMBL" id="M74180">
    <property type="protein sequence ID" value="AAA50166.1"/>
    <property type="molecule type" value="Genomic_DNA"/>
</dbReference>
<dbReference type="EMBL" id="M74181">
    <property type="protein sequence ID" value="AAA50167.1"/>
    <property type="molecule type" value="mRNA"/>
</dbReference>
<dbReference type="EMBL" id="AK040934">
    <property type="protein sequence ID" value="BAC30752.1"/>
    <property type="molecule type" value="mRNA"/>
</dbReference>
<dbReference type="EMBL" id="AK144824">
    <property type="protein sequence ID" value="BAE26084.1"/>
    <property type="molecule type" value="mRNA"/>
</dbReference>
<dbReference type="EMBL" id="CH466560">
    <property type="protein sequence ID" value="EDL21265.1"/>
    <property type="molecule type" value="Genomic_DNA"/>
</dbReference>
<dbReference type="EMBL" id="BC051393">
    <property type="protein sequence ID" value="AAH51393.1"/>
    <property type="molecule type" value="mRNA"/>
</dbReference>
<dbReference type="CCDS" id="CCDS40766.1"/>
<dbReference type="PIR" id="A40332">
    <property type="entry name" value="A40332"/>
</dbReference>
<dbReference type="RefSeq" id="NP_032269.3">
    <property type="nucleotide sequence ID" value="NM_008243.3"/>
</dbReference>
<dbReference type="SMR" id="P26928"/>
<dbReference type="DIP" id="DIP-60723N"/>
<dbReference type="FunCoup" id="P26928">
    <property type="interactions" value="476"/>
</dbReference>
<dbReference type="IntAct" id="P26928">
    <property type="interactions" value="2"/>
</dbReference>
<dbReference type="STRING" id="10090.ENSMUSP00000035211"/>
<dbReference type="MEROPS" id="S01.975"/>
<dbReference type="GlyCosmos" id="P26928">
    <property type="glycosylation" value="4 sites, No reported glycans"/>
</dbReference>
<dbReference type="GlyGen" id="P26928">
    <property type="glycosylation" value="5 sites"/>
</dbReference>
<dbReference type="iPTMnet" id="P26928"/>
<dbReference type="PhosphoSitePlus" id="P26928"/>
<dbReference type="PaxDb" id="10090-ENSMUSP00000035211"/>
<dbReference type="PeptideAtlas" id="P26928"/>
<dbReference type="ProteomicsDB" id="269785"/>
<dbReference type="TopDownProteomics" id="P26928"/>
<dbReference type="Antibodypedia" id="13649">
    <property type="antibodies" value="324 antibodies from 21 providers"/>
</dbReference>
<dbReference type="DNASU" id="15235"/>
<dbReference type="Ensembl" id="ENSMUST00000035211.14">
    <property type="protein sequence ID" value="ENSMUSP00000035211.8"/>
    <property type="gene ID" value="ENSMUSG00000032591.16"/>
</dbReference>
<dbReference type="GeneID" id="15235"/>
<dbReference type="KEGG" id="mmu:15235"/>
<dbReference type="UCSC" id="uc009ror.2">
    <property type="organism name" value="mouse"/>
</dbReference>
<dbReference type="AGR" id="MGI:96080"/>
<dbReference type="CTD" id="4485"/>
<dbReference type="MGI" id="MGI:96080">
    <property type="gene designation" value="Mst1"/>
</dbReference>
<dbReference type="VEuPathDB" id="HostDB:ENSMUSG00000032591"/>
<dbReference type="eggNOG" id="ENOG502QRJ0">
    <property type="taxonomic scope" value="Eukaryota"/>
</dbReference>
<dbReference type="GeneTree" id="ENSGT00940000159461"/>
<dbReference type="InParanoid" id="P26928"/>
<dbReference type="OMA" id="YQIPRCT"/>
<dbReference type="OrthoDB" id="41905at2759"/>
<dbReference type="PhylomeDB" id="P26928"/>
<dbReference type="TreeFam" id="TF329901"/>
<dbReference type="Reactome" id="R-MMU-8852405">
    <property type="pathway name" value="Signaling by MST1"/>
</dbReference>
<dbReference type="BioGRID-ORCS" id="15235">
    <property type="hits" value="2 hits in 79 CRISPR screens"/>
</dbReference>
<dbReference type="ChiTaRS" id="Mst1">
    <property type="organism name" value="mouse"/>
</dbReference>
<dbReference type="PRO" id="PR:P26928"/>
<dbReference type="Proteomes" id="UP000000589">
    <property type="component" value="Chromosome 9"/>
</dbReference>
<dbReference type="RNAct" id="P26928">
    <property type="molecule type" value="protein"/>
</dbReference>
<dbReference type="Bgee" id="ENSMUSG00000032591">
    <property type="expression patterns" value="Expressed in left lobe of liver and 69 other cell types or tissues"/>
</dbReference>
<dbReference type="ExpressionAtlas" id="P26928">
    <property type="expression patterns" value="baseline and differential"/>
</dbReference>
<dbReference type="GO" id="GO:0005615">
    <property type="term" value="C:extracellular space"/>
    <property type="evidence" value="ECO:0000250"/>
    <property type="project" value="UniProtKB"/>
</dbReference>
<dbReference type="GO" id="GO:0005773">
    <property type="term" value="C:vacuole"/>
    <property type="evidence" value="ECO:0000314"/>
    <property type="project" value="MGI"/>
</dbReference>
<dbReference type="GO" id="GO:0030971">
    <property type="term" value="F:receptor tyrosine kinase binding"/>
    <property type="evidence" value="ECO:0000250"/>
    <property type="project" value="UniProtKB"/>
</dbReference>
<dbReference type="GO" id="GO:0004252">
    <property type="term" value="F:serine-type endopeptidase activity"/>
    <property type="evidence" value="ECO:0007669"/>
    <property type="project" value="InterPro"/>
</dbReference>
<dbReference type="GO" id="GO:0007566">
    <property type="term" value="P:embryo implantation"/>
    <property type="evidence" value="ECO:0000314"/>
    <property type="project" value="MGI"/>
</dbReference>
<dbReference type="GO" id="GO:0060763">
    <property type="term" value="P:mammary duct terminal end bud growth"/>
    <property type="evidence" value="ECO:0000315"/>
    <property type="project" value="MGI"/>
</dbReference>
<dbReference type="GO" id="GO:0030879">
    <property type="term" value="P:mammary gland development"/>
    <property type="evidence" value="ECO:0000315"/>
    <property type="project" value="MGI"/>
</dbReference>
<dbReference type="GO" id="GO:1904036">
    <property type="term" value="P:negative regulation of epithelial cell apoptotic process"/>
    <property type="evidence" value="ECO:0000315"/>
    <property type="project" value="MGI"/>
</dbReference>
<dbReference type="GO" id="GO:0045721">
    <property type="term" value="P:negative regulation of gluconeogenesis"/>
    <property type="evidence" value="ECO:0000250"/>
    <property type="project" value="UniProtKB"/>
</dbReference>
<dbReference type="GO" id="GO:0010628">
    <property type="term" value="P:positive regulation of gene expression"/>
    <property type="evidence" value="ECO:0000315"/>
    <property type="project" value="MGI"/>
</dbReference>
<dbReference type="GO" id="GO:0033601">
    <property type="term" value="P:positive regulation of mammary gland epithelial cell proliferation"/>
    <property type="evidence" value="ECO:0000315"/>
    <property type="project" value="MGI"/>
</dbReference>
<dbReference type="GO" id="GO:0006508">
    <property type="term" value="P:proteolysis"/>
    <property type="evidence" value="ECO:0007669"/>
    <property type="project" value="InterPro"/>
</dbReference>
<dbReference type="GO" id="GO:2000479">
    <property type="term" value="P:regulation of cAMP-dependent protein kinase activity"/>
    <property type="evidence" value="ECO:0000250"/>
    <property type="project" value="UniProtKB"/>
</dbReference>
<dbReference type="GO" id="GO:0010758">
    <property type="term" value="P:regulation of macrophage chemotaxis"/>
    <property type="evidence" value="ECO:0000315"/>
    <property type="project" value="MGI"/>
</dbReference>
<dbReference type="GO" id="GO:0046425">
    <property type="term" value="P:regulation of receptor signaling pathway via JAK-STAT"/>
    <property type="evidence" value="ECO:0000315"/>
    <property type="project" value="MGI"/>
</dbReference>
<dbReference type="CDD" id="cd00108">
    <property type="entry name" value="KR"/>
    <property type="match status" value="4"/>
</dbReference>
<dbReference type="CDD" id="cd01099">
    <property type="entry name" value="PAN_AP_HGF"/>
    <property type="match status" value="1"/>
</dbReference>
<dbReference type="CDD" id="cd00190">
    <property type="entry name" value="Tryp_SPc"/>
    <property type="match status" value="1"/>
</dbReference>
<dbReference type="FunFam" id="2.40.20.10:FF:000002">
    <property type="entry name" value="Hepatocyte growth factor"/>
    <property type="match status" value="2"/>
</dbReference>
<dbReference type="FunFam" id="2.40.20.10:FF:000004">
    <property type="entry name" value="Hepatocyte growth factor"/>
    <property type="match status" value="1"/>
</dbReference>
<dbReference type="FunFam" id="2.40.10.10:FF:000055">
    <property type="entry name" value="Hepatocyte growth factor-like 1"/>
    <property type="match status" value="1"/>
</dbReference>
<dbReference type="FunFam" id="2.40.20.10:FF:000009">
    <property type="entry name" value="Hepatocyte growth factor-like 1"/>
    <property type="match status" value="1"/>
</dbReference>
<dbReference type="FunFam" id="3.50.4.10:FF:000004">
    <property type="entry name" value="Hepatocyte growth factor-like 1"/>
    <property type="match status" value="1"/>
</dbReference>
<dbReference type="FunFam" id="2.40.10.10:FF:000064">
    <property type="entry name" value="Hepatocyte growth factor-like protein"/>
    <property type="match status" value="1"/>
</dbReference>
<dbReference type="Gene3D" id="3.50.4.10">
    <property type="entry name" value="Hepatocyte Growth Factor"/>
    <property type="match status" value="1"/>
</dbReference>
<dbReference type="Gene3D" id="2.40.20.10">
    <property type="entry name" value="Plasminogen Kringle 4"/>
    <property type="match status" value="4"/>
</dbReference>
<dbReference type="Gene3D" id="2.40.10.10">
    <property type="entry name" value="Trypsin-like serine proteases"/>
    <property type="match status" value="2"/>
</dbReference>
<dbReference type="InterPro" id="IPR024174">
    <property type="entry name" value="HGF/MST1"/>
</dbReference>
<dbReference type="InterPro" id="IPR000001">
    <property type="entry name" value="Kringle"/>
</dbReference>
<dbReference type="InterPro" id="IPR013806">
    <property type="entry name" value="Kringle-like"/>
</dbReference>
<dbReference type="InterPro" id="IPR018056">
    <property type="entry name" value="Kringle_CS"/>
</dbReference>
<dbReference type="InterPro" id="IPR038178">
    <property type="entry name" value="Kringle_sf"/>
</dbReference>
<dbReference type="InterPro" id="IPR043575">
    <property type="entry name" value="MSP_HGFL"/>
</dbReference>
<dbReference type="InterPro" id="IPR003609">
    <property type="entry name" value="Pan_app"/>
</dbReference>
<dbReference type="InterPro" id="IPR009003">
    <property type="entry name" value="Peptidase_S1_PA"/>
</dbReference>
<dbReference type="InterPro" id="IPR043504">
    <property type="entry name" value="Peptidase_S1_PA_chymotrypsin"/>
</dbReference>
<dbReference type="InterPro" id="IPR001314">
    <property type="entry name" value="Peptidase_S1A"/>
</dbReference>
<dbReference type="InterPro" id="IPR050759">
    <property type="entry name" value="Serine_protease_kringle"/>
</dbReference>
<dbReference type="InterPro" id="IPR001254">
    <property type="entry name" value="Trypsin_dom"/>
</dbReference>
<dbReference type="PANTHER" id="PTHR24261:SF7">
    <property type="entry name" value="KRINGLE DOMAIN-CONTAINING PROTEIN"/>
    <property type="match status" value="1"/>
</dbReference>
<dbReference type="PANTHER" id="PTHR24261">
    <property type="entry name" value="PLASMINOGEN-RELATED"/>
    <property type="match status" value="1"/>
</dbReference>
<dbReference type="Pfam" id="PF00051">
    <property type="entry name" value="Kringle"/>
    <property type="match status" value="4"/>
</dbReference>
<dbReference type="Pfam" id="PF00024">
    <property type="entry name" value="PAN_1"/>
    <property type="match status" value="1"/>
</dbReference>
<dbReference type="Pfam" id="PF00089">
    <property type="entry name" value="Trypsin"/>
    <property type="match status" value="1"/>
</dbReference>
<dbReference type="PIRSF" id="PIRSF001152">
    <property type="entry name" value="HGF_MST1"/>
    <property type="match status" value="1"/>
</dbReference>
<dbReference type="PIRSF" id="PIRSF500185">
    <property type="entry name" value="MSP_HGFL"/>
    <property type="match status" value="1"/>
</dbReference>
<dbReference type="PRINTS" id="PR00722">
    <property type="entry name" value="CHYMOTRYPSIN"/>
</dbReference>
<dbReference type="PRINTS" id="PR00018">
    <property type="entry name" value="KRINGLE"/>
</dbReference>
<dbReference type="SMART" id="SM00130">
    <property type="entry name" value="KR"/>
    <property type="match status" value="4"/>
</dbReference>
<dbReference type="SMART" id="SM00473">
    <property type="entry name" value="PAN_AP"/>
    <property type="match status" value="1"/>
</dbReference>
<dbReference type="SMART" id="SM00020">
    <property type="entry name" value="Tryp_SPc"/>
    <property type="match status" value="1"/>
</dbReference>
<dbReference type="SUPFAM" id="SSF57414">
    <property type="entry name" value="Hairpin loop containing domain-like"/>
    <property type="match status" value="1"/>
</dbReference>
<dbReference type="SUPFAM" id="SSF57440">
    <property type="entry name" value="Kringle-like"/>
    <property type="match status" value="4"/>
</dbReference>
<dbReference type="SUPFAM" id="SSF50494">
    <property type="entry name" value="Trypsin-like serine proteases"/>
    <property type="match status" value="1"/>
</dbReference>
<dbReference type="PROSITE" id="PS00021">
    <property type="entry name" value="KRINGLE_1"/>
    <property type="match status" value="4"/>
</dbReference>
<dbReference type="PROSITE" id="PS50070">
    <property type="entry name" value="KRINGLE_2"/>
    <property type="match status" value="4"/>
</dbReference>
<dbReference type="PROSITE" id="PS50948">
    <property type="entry name" value="PAN"/>
    <property type="match status" value="1"/>
</dbReference>
<dbReference type="PROSITE" id="PS50240">
    <property type="entry name" value="TRYPSIN_DOM"/>
    <property type="match status" value="1"/>
</dbReference>
<accession>P26928</accession>
<accession>Q6GTL1</accession>
<evidence type="ECO:0000250" key="1"/>
<evidence type="ECO:0000255" key="2"/>
<evidence type="ECO:0000255" key="3">
    <source>
        <dbReference type="PROSITE-ProRule" id="PRU00121"/>
    </source>
</evidence>
<evidence type="ECO:0000255" key="4">
    <source>
        <dbReference type="PROSITE-ProRule" id="PRU00274"/>
    </source>
</evidence>
<evidence type="ECO:0000255" key="5">
    <source>
        <dbReference type="PROSITE-ProRule" id="PRU00315"/>
    </source>
</evidence>
<evidence type="ECO:0000305" key="6"/>
<name>HGFL_MOUSE</name>
<proteinExistence type="evidence at transcript level"/>
<organism>
    <name type="scientific">Mus musculus</name>
    <name type="common">Mouse</name>
    <dbReference type="NCBI Taxonomy" id="10090"/>
    <lineage>
        <taxon>Eukaryota</taxon>
        <taxon>Metazoa</taxon>
        <taxon>Chordata</taxon>
        <taxon>Craniata</taxon>
        <taxon>Vertebrata</taxon>
        <taxon>Euteleostomi</taxon>
        <taxon>Mammalia</taxon>
        <taxon>Eutheria</taxon>
        <taxon>Euarchontoglires</taxon>
        <taxon>Glires</taxon>
        <taxon>Rodentia</taxon>
        <taxon>Myomorpha</taxon>
        <taxon>Muroidea</taxon>
        <taxon>Muridae</taxon>
        <taxon>Murinae</taxon>
        <taxon>Mus</taxon>
        <taxon>Mus</taxon>
    </lineage>
</organism>
<sequence length="716" mass="80619">MGWLPLLLLLVQCSRALGQRSPLNDFQLFRGTELRNLLHTAVPGPWQEDVADAEECARRCGPLLDCRAFHYNMSSHGCQLLPWTQHSLHTQLYHSSLCHLFQKKDYVRTCIMDNGVSYRGTVARTAGGLPCQAWSRRFPNDHKYTPTPKNGLEENFCRNPDGDPRGPWCYTTNRSVRFQSCGIKTCREAVCVLCNGEDYRGEVDVTESGRECQRWDLQHPHSHPFQPEKFLDKDLKDNYCRNPDGSERPWCYTTDPNVEREFCDLPSCGPNLPPTVKGSKSQRRNKGKALNCFRGKGEDYRGTTNTTSAGVPCQRWDAQSPHQHRFVPEKYACKDLRENFCRNPDGSEAPWCFTSRPGLRMAFCHQIPRCTEELVPEGCYHGSGEQYRGSVSKTRKGVQCQHWSSETPHKPQFTPTSAPQAGLEANFCRNPDGDSHGPWCYTLDPDILFDYCALQRCDDDQPPSILDPPDQVVFEKCGKRVDKSNKLRVVGGHPGNSPWTVSLRNRQGQHFCGGSLVKEQWVLTARQCIWSCHEPLTGYEVWLGTINQNPQPGEANLQRVPVAKAVCGPAGSQLVLLKLERPVILNHHVALICLPPEQYVVPPGTKCEIAGWGESIGTSNNTVLHVASMNVISNQECNTKYRGHIQESEICTQGLVVPVGACEGDYGGPLACYTHDCWVLQGLIIPNRVCARPRWPAIFTRVSVFVDWINKVMQLE</sequence>
<reference key="1">
    <citation type="journal article" date="1991" name="Biochemistry">
        <title>Characterization of the mouse cDNA and gene coding for a hepatocyte growth factor-like protein: expression during development.</title>
        <authorList>
            <person name="Friezner Degen S.J."/>
            <person name="Stuart L.A."/>
            <person name="Han S."/>
            <person name="Jamison C.S."/>
        </authorList>
    </citation>
    <scope>NUCLEOTIDE SEQUENCE [GENOMIC DNA / MRNA]</scope>
    <source>
        <strain>BALB/cJ</strain>
        <tissue>Liver</tissue>
    </source>
</reference>
<reference key="2">
    <citation type="journal article" date="2005" name="Science">
        <title>The transcriptional landscape of the mammalian genome.</title>
        <authorList>
            <person name="Carninci P."/>
            <person name="Kasukawa T."/>
            <person name="Katayama S."/>
            <person name="Gough J."/>
            <person name="Frith M.C."/>
            <person name="Maeda N."/>
            <person name="Oyama R."/>
            <person name="Ravasi T."/>
            <person name="Lenhard B."/>
            <person name="Wells C."/>
            <person name="Kodzius R."/>
            <person name="Shimokawa K."/>
            <person name="Bajic V.B."/>
            <person name="Brenner S.E."/>
            <person name="Batalov S."/>
            <person name="Forrest A.R."/>
            <person name="Zavolan M."/>
            <person name="Davis M.J."/>
            <person name="Wilming L.G."/>
            <person name="Aidinis V."/>
            <person name="Allen J.E."/>
            <person name="Ambesi-Impiombato A."/>
            <person name="Apweiler R."/>
            <person name="Aturaliya R.N."/>
            <person name="Bailey T.L."/>
            <person name="Bansal M."/>
            <person name="Baxter L."/>
            <person name="Beisel K.W."/>
            <person name="Bersano T."/>
            <person name="Bono H."/>
            <person name="Chalk A.M."/>
            <person name="Chiu K.P."/>
            <person name="Choudhary V."/>
            <person name="Christoffels A."/>
            <person name="Clutterbuck D.R."/>
            <person name="Crowe M.L."/>
            <person name="Dalla E."/>
            <person name="Dalrymple B.P."/>
            <person name="de Bono B."/>
            <person name="Della Gatta G."/>
            <person name="di Bernardo D."/>
            <person name="Down T."/>
            <person name="Engstrom P."/>
            <person name="Fagiolini M."/>
            <person name="Faulkner G."/>
            <person name="Fletcher C.F."/>
            <person name="Fukushima T."/>
            <person name="Furuno M."/>
            <person name="Futaki S."/>
            <person name="Gariboldi M."/>
            <person name="Georgii-Hemming P."/>
            <person name="Gingeras T.R."/>
            <person name="Gojobori T."/>
            <person name="Green R.E."/>
            <person name="Gustincich S."/>
            <person name="Harbers M."/>
            <person name="Hayashi Y."/>
            <person name="Hensch T.K."/>
            <person name="Hirokawa N."/>
            <person name="Hill D."/>
            <person name="Huminiecki L."/>
            <person name="Iacono M."/>
            <person name="Ikeo K."/>
            <person name="Iwama A."/>
            <person name="Ishikawa T."/>
            <person name="Jakt M."/>
            <person name="Kanapin A."/>
            <person name="Katoh M."/>
            <person name="Kawasawa Y."/>
            <person name="Kelso J."/>
            <person name="Kitamura H."/>
            <person name="Kitano H."/>
            <person name="Kollias G."/>
            <person name="Krishnan S.P."/>
            <person name="Kruger A."/>
            <person name="Kummerfeld S.K."/>
            <person name="Kurochkin I.V."/>
            <person name="Lareau L.F."/>
            <person name="Lazarevic D."/>
            <person name="Lipovich L."/>
            <person name="Liu J."/>
            <person name="Liuni S."/>
            <person name="McWilliam S."/>
            <person name="Madan Babu M."/>
            <person name="Madera M."/>
            <person name="Marchionni L."/>
            <person name="Matsuda H."/>
            <person name="Matsuzawa S."/>
            <person name="Miki H."/>
            <person name="Mignone F."/>
            <person name="Miyake S."/>
            <person name="Morris K."/>
            <person name="Mottagui-Tabar S."/>
            <person name="Mulder N."/>
            <person name="Nakano N."/>
            <person name="Nakauchi H."/>
            <person name="Ng P."/>
            <person name="Nilsson R."/>
            <person name="Nishiguchi S."/>
            <person name="Nishikawa S."/>
            <person name="Nori F."/>
            <person name="Ohara O."/>
            <person name="Okazaki Y."/>
            <person name="Orlando V."/>
            <person name="Pang K.C."/>
            <person name="Pavan W.J."/>
            <person name="Pavesi G."/>
            <person name="Pesole G."/>
            <person name="Petrovsky N."/>
            <person name="Piazza S."/>
            <person name="Reed J."/>
            <person name="Reid J.F."/>
            <person name="Ring B.Z."/>
            <person name="Ringwald M."/>
            <person name="Rost B."/>
            <person name="Ruan Y."/>
            <person name="Salzberg S.L."/>
            <person name="Sandelin A."/>
            <person name="Schneider C."/>
            <person name="Schoenbach C."/>
            <person name="Sekiguchi K."/>
            <person name="Semple C.A."/>
            <person name="Seno S."/>
            <person name="Sessa L."/>
            <person name="Sheng Y."/>
            <person name="Shibata Y."/>
            <person name="Shimada H."/>
            <person name="Shimada K."/>
            <person name="Silva D."/>
            <person name="Sinclair B."/>
            <person name="Sperling S."/>
            <person name="Stupka E."/>
            <person name="Sugiura K."/>
            <person name="Sultana R."/>
            <person name="Takenaka Y."/>
            <person name="Taki K."/>
            <person name="Tammoja K."/>
            <person name="Tan S.L."/>
            <person name="Tang S."/>
            <person name="Taylor M.S."/>
            <person name="Tegner J."/>
            <person name="Teichmann S.A."/>
            <person name="Ueda H.R."/>
            <person name="van Nimwegen E."/>
            <person name="Verardo R."/>
            <person name="Wei C.L."/>
            <person name="Yagi K."/>
            <person name="Yamanishi H."/>
            <person name="Zabarovsky E."/>
            <person name="Zhu S."/>
            <person name="Zimmer A."/>
            <person name="Hide W."/>
            <person name="Bult C."/>
            <person name="Grimmond S.M."/>
            <person name="Teasdale R.D."/>
            <person name="Liu E.T."/>
            <person name="Brusic V."/>
            <person name="Quackenbush J."/>
            <person name="Wahlestedt C."/>
            <person name="Mattick J.S."/>
            <person name="Hume D.A."/>
            <person name="Kai C."/>
            <person name="Sasaki D."/>
            <person name="Tomaru Y."/>
            <person name="Fukuda S."/>
            <person name="Kanamori-Katayama M."/>
            <person name="Suzuki M."/>
            <person name="Aoki J."/>
            <person name="Arakawa T."/>
            <person name="Iida J."/>
            <person name="Imamura K."/>
            <person name="Itoh M."/>
            <person name="Kato T."/>
            <person name="Kawaji H."/>
            <person name="Kawagashira N."/>
            <person name="Kawashima T."/>
            <person name="Kojima M."/>
            <person name="Kondo S."/>
            <person name="Konno H."/>
            <person name="Nakano K."/>
            <person name="Ninomiya N."/>
            <person name="Nishio T."/>
            <person name="Okada M."/>
            <person name="Plessy C."/>
            <person name="Shibata K."/>
            <person name="Shiraki T."/>
            <person name="Suzuki S."/>
            <person name="Tagami M."/>
            <person name="Waki K."/>
            <person name="Watahiki A."/>
            <person name="Okamura-Oho Y."/>
            <person name="Suzuki H."/>
            <person name="Kawai J."/>
            <person name="Hayashizaki Y."/>
        </authorList>
    </citation>
    <scope>NUCLEOTIDE SEQUENCE [LARGE SCALE MRNA]</scope>
    <source>
        <strain>C57BL/6J</strain>
        <tissue>Aorta</tissue>
        <tissue>Lung</tissue>
    </source>
</reference>
<reference key="3">
    <citation type="submission" date="2005-07" db="EMBL/GenBank/DDBJ databases">
        <authorList>
            <person name="Mural R.J."/>
            <person name="Adams M.D."/>
            <person name="Myers E.W."/>
            <person name="Smith H.O."/>
            <person name="Venter J.C."/>
        </authorList>
    </citation>
    <scope>NUCLEOTIDE SEQUENCE [LARGE SCALE GENOMIC DNA]</scope>
</reference>
<reference key="4">
    <citation type="journal article" date="2004" name="Genome Res.">
        <title>The status, quality, and expansion of the NIH full-length cDNA project: the Mammalian Gene Collection (MGC).</title>
        <authorList>
            <consortium name="The MGC Project Team"/>
        </authorList>
    </citation>
    <scope>NUCLEOTIDE SEQUENCE [LARGE SCALE MRNA]</scope>
    <source>
        <strain>FVB/N</strain>
        <tissue>Liver</tissue>
    </source>
</reference>
<comment type="subunit">
    <text evidence="1">Dimer of an alpha chain and a beta chain linked by a disulfide bond. Interacts (via beta chain) with MST1R (via SEMA domain).</text>
</comment>
<comment type="subcellular location">
    <subcellularLocation>
        <location evidence="6">Secreted</location>
    </subcellularLocation>
</comment>
<comment type="tissue specificity">
    <text>Liver. Lower levels in lung, placenta and adrenal.</text>
</comment>
<comment type="developmental stage">
    <text>Is expressed at low levels during gestation. Just before birth the level increases dramatically and remains stable afterwards.</text>
</comment>
<comment type="PTM">
    <text>Cleaved after Arg-488, probably by HPN/Hepsin, to yield the active form consisting of two disulfide-linked chains.</text>
</comment>
<comment type="similarity">
    <text evidence="4">Belongs to the peptidase S1 family. Plasminogen subfamily.</text>
</comment>
<comment type="caution">
    <text evidence="6">The active site residues characteristic of serine proteases appear to be absent from this protein, which may therefore lack catalytic activity.</text>
</comment>
<protein>
    <recommendedName>
        <fullName>Hepatocyte growth factor-like protein</fullName>
    </recommendedName>
    <alternativeName>
        <fullName>Macrophage stimulatory protein</fullName>
        <shortName>MSP</shortName>
    </alternativeName>
    <component>
        <recommendedName>
            <fullName>Hepatocyte growth factor-like protein alpha chain</fullName>
        </recommendedName>
    </component>
    <component>
        <recommendedName>
            <fullName>Hepatocyte growth factor-like protein beta chain</fullName>
        </recommendedName>
    </component>
</protein>
<keyword id="KW-1015">Disulfide bond</keyword>
<keyword id="KW-0325">Glycoprotein</keyword>
<keyword id="KW-0420">Kringle</keyword>
<keyword id="KW-1185">Reference proteome</keyword>
<keyword id="KW-0677">Repeat</keyword>
<keyword id="KW-0964">Secreted</keyword>
<keyword id="KW-0721">Serine protease homolog</keyword>
<keyword id="KW-0732">Signal</keyword>
<gene>
    <name type="primary">Mst1</name>
    <name type="synonym">Hgfl</name>
</gene>
<feature type="signal peptide" evidence="2">
    <location>
        <begin position="1"/>
        <end position="18"/>
    </location>
</feature>
<feature type="chain" id="PRO_0000028088" description="Hepatocyte growth factor-like protein">
    <location>
        <begin position="19"/>
        <end position="716"/>
    </location>
</feature>
<feature type="chain" id="PRO_0000028089" description="Hepatocyte growth factor-like protein alpha chain" evidence="1">
    <location>
        <begin position="19"/>
        <end position="488"/>
    </location>
</feature>
<feature type="chain" id="PRO_0000028090" description="Hepatocyte growth factor-like protein beta chain" evidence="1">
    <location>
        <begin position="489"/>
        <end position="716"/>
    </location>
</feature>
<feature type="domain" description="PAN" evidence="5">
    <location>
        <begin position="19"/>
        <end position="105"/>
    </location>
</feature>
<feature type="domain" description="Kringle 1" evidence="3">
    <location>
        <begin position="110"/>
        <end position="186"/>
    </location>
</feature>
<feature type="domain" description="Kringle 2" evidence="3">
    <location>
        <begin position="191"/>
        <end position="268"/>
    </location>
</feature>
<feature type="domain" description="Kringle 3" evidence="3">
    <location>
        <begin position="292"/>
        <end position="370"/>
    </location>
</feature>
<feature type="domain" description="Kringle 4" evidence="3">
    <location>
        <begin position="379"/>
        <end position="457"/>
    </location>
</feature>
<feature type="domain" description="Peptidase S1" evidence="4">
    <location>
        <begin position="489"/>
        <end position="714"/>
    </location>
</feature>
<feature type="glycosylation site" description="N-linked (GlcNAc...) asparagine" evidence="2">
    <location>
        <position position="72"/>
    </location>
</feature>
<feature type="glycosylation site" description="N-linked (GlcNAc...) asparagine" evidence="2">
    <location>
        <position position="173"/>
    </location>
</feature>
<feature type="glycosylation site" description="N-linked (GlcNAc...) asparagine" evidence="2">
    <location>
        <position position="305"/>
    </location>
</feature>
<feature type="glycosylation site" description="N-linked (GlcNAc...) asparagine" evidence="2">
    <location>
        <position position="620"/>
    </location>
</feature>
<feature type="disulfide bond" evidence="1">
    <location>
        <begin position="56"/>
        <end position="78"/>
    </location>
</feature>
<feature type="disulfide bond" evidence="1">
    <location>
        <begin position="60"/>
        <end position="66"/>
    </location>
</feature>
<feature type="disulfide bond" evidence="1">
    <location>
        <begin position="110"/>
        <end position="186"/>
    </location>
</feature>
<feature type="disulfide bond" evidence="1">
    <location>
        <begin position="131"/>
        <end position="169"/>
    </location>
</feature>
<feature type="disulfide bond" evidence="1">
    <location>
        <begin position="157"/>
        <end position="181"/>
    </location>
</feature>
<feature type="disulfide bond" evidence="1">
    <location>
        <begin position="191"/>
        <end position="268"/>
    </location>
</feature>
<feature type="disulfide bond" evidence="2">
    <location>
        <begin position="194"/>
        <end position="333"/>
    </location>
</feature>
<feature type="disulfide bond" evidence="1">
    <location>
        <begin position="212"/>
        <end position="251"/>
    </location>
</feature>
<feature type="disulfide bond" evidence="1">
    <location>
        <begin position="240"/>
        <end position="263"/>
    </location>
</feature>
<feature type="disulfide bond" evidence="1">
    <location>
        <begin position="292"/>
        <end position="370"/>
    </location>
</feature>
<feature type="disulfide bond" evidence="1">
    <location>
        <begin position="313"/>
        <end position="352"/>
    </location>
</feature>
<feature type="disulfide bond" evidence="1">
    <location>
        <begin position="341"/>
        <end position="364"/>
    </location>
</feature>
<feature type="disulfide bond" evidence="1">
    <location>
        <begin position="379"/>
        <end position="457"/>
    </location>
</feature>
<feature type="disulfide bond" evidence="1">
    <location>
        <begin position="400"/>
        <end position="440"/>
    </location>
</feature>
<feature type="disulfide bond" evidence="1">
    <location>
        <begin position="428"/>
        <end position="452"/>
    </location>
</feature>
<feature type="disulfide bond" description="Interchain (between alpha and beta chains)" evidence="3 4 5">
    <location>
        <begin position="477"/>
        <end position="593"/>
    </location>
</feature>
<feature type="disulfide bond" evidence="1">
    <location>
        <begin position="512"/>
        <end position="528"/>
    </location>
</feature>
<feature type="disulfide bond" evidence="1">
    <location>
        <begin position="607"/>
        <end position="672"/>
    </location>
</feature>
<feature type="disulfide bond" evidence="1">
    <location>
        <begin position="637"/>
        <end position="651"/>
    </location>
</feature>
<feature type="disulfide bond" evidence="1">
    <location>
        <begin position="662"/>
        <end position="690"/>
    </location>
</feature>
<feature type="sequence conflict" description="In Ref. 1; AAA50167." evidence="6" ref="1">
    <original>Q</original>
    <variation>P</variation>
    <location>
        <position position="19"/>
    </location>
</feature>